<name>TIM10_YARLI</name>
<sequence>MSFLGLGGQNPNGPSNPQKLLAAEAELDMVTDMFNRLVESCHEKCIKADYSSGDLNANEGLCLDRCVAKYFDVNTKVGEVSMRGADGNYGLEDTANTVHAEAWKQRILHGPTLNVKYVHRIKVHEIVRLTMVYLAPWHFN</sequence>
<reference key="1">
    <citation type="journal article" date="2004" name="Nature">
        <title>Genome evolution in yeasts.</title>
        <authorList>
            <person name="Dujon B."/>
            <person name="Sherman D."/>
            <person name="Fischer G."/>
            <person name="Durrens P."/>
            <person name="Casaregola S."/>
            <person name="Lafontaine I."/>
            <person name="de Montigny J."/>
            <person name="Marck C."/>
            <person name="Neuveglise C."/>
            <person name="Talla E."/>
            <person name="Goffard N."/>
            <person name="Frangeul L."/>
            <person name="Aigle M."/>
            <person name="Anthouard V."/>
            <person name="Babour A."/>
            <person name="Barbe V."/>
            <person name="Barnay S."/>
            <person name="Blanchin S."/>
            <person name="Beckerich J.-M."/>
            <person name="Beyne E."/>
            <person name="Bleykasten C."/>
            <person name="Boisrame A."/>
            <person name="Boyer J."/>
            <person name="Cattolico L."/>
            <person name="Confanioleri F."/>
            <person name="de Daruvar A."/>
            <person name="Despons L."/>
            <person name="Fabre E."/>
            <person name="Fairhead C."/>
            <person name="Ferry-Dumazet H."/>
            <person name="Groppi A."/>
            <person name="Hantraye F."/>
            <person name="Hennequin C."/>
            <person name="Jauniaux N."/>
            <person name="Joyet P."/>
            <person name="Kachouri R."/>
            <person name="Kerrest A."/>
            <person name="Koszul R."/>
            <person name="Lemaire M."/>
            <person name="Lesur I."/>
            <person name="Ma L."/>
            <person name="Muller H."/>
            <person name="Nicaud J.-M."/>
            <person name="Nikolski M."/>
            <person name="Oztas S."/>
            <person name="Ozier-Kalogeropoulos O."/>
            <person name="Pellenz S."/>
            <person name="Potier S."/>
            <person name="Richard G.-F."/>
            <person name="Straub M.-L."/>
            <person name="Suleau A."/>
            <person name="Swennen D."/>
            <person name="Tekaia F."/>
            <person name="Wesolowski-Louvel M."/>
            <person name="Westhof E."/>
            <person name="Wirth B."/>
            <person name="Zeniou-Meyer M."/>
            <person name="Zivanovic Y."/>
            <person name="Bolotin-Fukuhara M."/>
            <person name="Thierry A."/>
            <person name="Bouchier C."/>
            <person name="Caudron B."/>
            <person name="Scarpelli C."/>
            <person name="Gaillardin C."/>
            <person name="Weissenbach J."/>
            <person name="Wincker P."/>
            <person name="Souciet J.-L."/>
        </authorList>
    </citation>
    <scope>NUCLEOTIDE SEQUENCE [LARGE SCALE GENOMIC DNA]</scope>
    <source>
        <strain>CLIB 122 / E 150</strain>
    </source>
</reference>
<evidence type="ECO:0000250" key="1"/>
<evidence type="ECO:0000305" key="2"/>
<protein>
    <recommendedName>
        <fullName>Mitochondrial import inner membrane translocase subunit TIM10</fullName>
    </recommendedName>
</protein>
<proteinExistence type="inferred from homology"/>
<accession>Q6C6U1</accession>
<organism>
    <name type="scientific">Yarrowia lipolytica (strain CLIB 122 / E 150)</name>
    <name type="common">Yeast</name>
    <name type="synonym">Candida lipolytica</name>
    <dbReference type="NCBI Taxonomy" id="284591"/>
    <lineage>
        <taxon>Eukaryota</taxon>
        <taxon>Fungi</taxon>
        <taxon>Dikarya</taxon>
        <taxon>Ascomycota</taxon>
        <taxon>Saccharomycotina</taxon>
        <taxon>Dipodascomycetes</taxon>
        <taxon>Dipodascales</taxon>
        <taxon>Dipodascales incertae sedis</taxon>
        <taxon>Yarrowia</taxon>
    </lineage>
</organism>
<dbReference type="EMBL" id="CR382131">
    <property type="protein sequence ID" value="CAG79202.1"/>
    <property type="molecule type" value="Genomic_DNA"/>
</dbReference>
<dbReference type="RefSeq" id="XP_503621.1">
    <property type="nucleotide sequence ID" value="XM_503621.1"/>
</dbReference>
<dbReference type="SMR" id="Q6C6U1"/>
<dbReference type="FunCoup" id="Q6C6U1">
    <property type="interactions" value="678"/>
</dbReference>
<dbReference type="STRING" id="284591.Q6C6U1"/>
<dbReference type="EnsemblFungi" id="CAG79202">
    <property type="protein sequence ID" value="CAG79202"/>
    <property type="gene ID" value="YALI0_E06237g"/>
</dbReference>
<dbReference type="VEuPathDB" id="FungiDB:YALI0_E06237g"/>
<dbReference type="HOGENOM" id="CLU_1836683_0_0_1"/>
<dbReference type="InParanoid" id="Q6C6U1"/>
<dbReference type="OMA" id="YLAPWHF"/>
<dbReference type="OrthoDB" id="102497at4891"/>
<dbReference type="Proteomes" id="UP000001300">
    <property type="component" value="Chromosome E"/>
</dbReference>
<dbReference type="GO" id="GO:0005743">
    <property type="term" value="C:mitochondrial inner membrane"/>
    <property type="evidence" value="ECO:0000318"/>
    <property type="project" value="GO_Central"/>
</dbReference>
<dbReference type="GO" id="GO:0046872">
    <property type="term" value="F:metal ion binding"/>
    <property type="evidence" value="ECO:0007669"/>
    <property type="project" value="UniProtKB-KW"/>
</dbReference>
<dbReference type="GO" id="GO:0045039">
    <property type="term" value="P:protein insertion into mitochondrial inner membrane"/>
    <property type="evidence" value="ECO:0000318"/>
    <property type="project" value="GO_Central"/>
</dbReference>
<dbReference type="Gene3D" id="1.10.287.810">
    <property type="entry name" value="Mitochondrial import inner membrane translocase subunit tim13 like domains"/>
    <property type="match status" value="1"/>
</dbReference>
<dbReference type="InterPro" id="IPR004217">
    <property type="entry name" value="Tim10-like"/>
</dbReference>
<dbReference type="InterPro" id="IPR035427">
    <property type="entry name" value="Tim10-like_dom_sf"/>
</dbReference>
<dbReference type="PANTHER" id="PTHR11038">
    <property type="entry name" value="MITOCHONDRIAL IMPORT INNER MEMBRANE TRANSLOCASE SUBUNIT TIM10"/>
    <property type="match status" value="1"/>
</dbReference>
<dbReference type="PANTHER" id="PTHR11038:SF16">
    <property type="entry name" value="MITOCHONDRIAL IMPORT INNER MEMBRANE TRANSLOCASE SUBUNIT TIM10"/>
    <property type="match status" value="1"/>
</dbReference>
<dbReference type="Pfam" id="PF02953">
    <property type="entry name" value="zf-Tim10_DDP"/>
    <property type="match status" value="1"/>
</dbReference>
<dbReference type="SUPFAM" id="SSF144122">
    <property type="entry name" value="Tim10-like"/>
    <property type="match status" value="1"/>
</dbReference>
<keyword id="KW-0143">Chaperone</keyword>
<keyword id="KW-1015">Disulfide bond</keyword>
<keyword id="KW-0472">Membrane</keyword>
<keyword id="KW-0479">Metal-binding</keyword>
<keyword id="KW-0496">Mitochondrion</keyword>
<keyword id="KW-0999">Mitochondrion inner membrane</keyword>
<keyword id="KW-0653">Protein transport</keyword>
<keyword id="KW-1185">Reference proteome</keyword>
<keyword id="KW-0811">Translocation</keyword>
<keyword id="KW-0813">Transport</keyword>
<keyword id="KW-0862">Zinc</keyword>
<gene>
    <name type="primary">TIM10</name>
    <name type="ordered locus">YALI0E06237g</name>
</gene>
<comment type="function">
    <text evidence="1">Mitochondrial intermembrane chaperone that participates in the import and insertion of multi-pass transmembrane proteins into the mitochondrial inner membrane. Also required for the transfer of beta-barrel precursors from the TOM complex to the sorting and assembly machinery (SAM complex) of the outer membrane. Acts as a chaperone-like protein that protects the hydrophobic precursors from aggregation and guide them through the mitochondrial intermembrane space (By similarity).</text>
</comment>
<comment type="subunit">
    <text evidence="1">Heterohexamer; composed of 3 copies of TIM9 and 3 copies of TIM10, named soluble 70 kDa complex. Associates directly with the TIM22 complex, whose core is composed of TIM22 and TIM54. Interacts with the transmembrane regions of multi-pass transmembrane proteins in transit (By similarity).</text>
</comment>
<comment type="subcellular location">
    <subcellularLocation>
        <location evidence="1">Mitochondrion inner membrane</location>
        <topology evidence="1">Peripheral membrane protein</topology>
        <orientation evidence="1">Intermembrane side</orientation>
    </subcellularLocation>
</comment>
<comment type="domain">
    <text evidence="1">The twin CX3C motif contains 4 conserved Cys residues that form 2 disulfide bonds in the mitochondrial intermembrane space. However, during the transit of TIM10 from cytoplasm into mitochondrion, the Cys residues probably coordinate zinc, thereby preventing folding and allowing its transfer across mitochondrial outer membrane (By similarity).</text>
</comment>
<comment type="similarity">
    <text evidence="2">Belongs to the small Tim family.</text>
</comment>
<feature type="chain" id="PRO_0000228065" description="Mitochondrial import inner membrane translocase subunit TIM10">
    <location>
        <begin position="1"/>
        <end position="140"/>
    </location>
</feature>
<feature type="short sequence motif" description="Twin CX3C motif">
    <location>
        <begin position="41"/>
        <end position="66"/>
    </location>
</feature>
<feature type="disulfide bond" evidence="1">
    <location>
        <begin position="41"/>
        <end position="66"/>
    </location>
</feature>
<feature type="disulfide bond" evidence="1">
    <location>
        <begin position="45"/>
        <end position="62"/>
    </location>
</feature>